<keyword id="KW-0997">Cell inner membrane</keyword>
<keyword id="KW-1003">Cell membrane</keyword>
<keyword id="KW-0472">Membrane</keyword>
<keyword id="KW-0812">Transmembrane</keyword>
<keyword id="KW-1133">Transmembrane helix</keyword>
<keyword id="KW-0813">Transport</keyword>
<gene>
    <name evidence="1" type="primary">mdtC</name>
    <name type="ordered locus">PC1_2968</name>
</gene>
<feature type="chain" id="PRO_1000215263" description="Multidrug resistance protein MdtC">
    <location>
        <begin position="1"/>
        <end position="1026"/>
    </location>
</feature>
<feature type="transmembrane region" description="Helical" evidence="1">
    <location>
        <begin position="12"/>
        <end position="32"/>
    </location>
</feature>
<feature type="transmembrane region" description="Helical" evidence="1">
    <location>
        <begin position="333"/>
        <end position="353"/>
    </location>
</feature>
<feature type="transmembrane region" description="Helical" evidence="1">
    <location>
        <begin position="360"/>
        <end position="380"/>
    </location>
</feature>
<feature type="transmembrane region" description="Helical" evidence="1">
    <location>
        <begin position="387"/>
        <end position="407"/>
    </location>
</feature>
<feature type="transmembrane region" description="Helical" evidence="1">
    <location>
        <begin position="431"/>
        <end position="451"/>
    </location>
</feature>
<feature type="transmembrane region" description="Helical" evidence="1">
    <location>
        <begin position="463"/>
        <end position="483"/>
    </location>
</feature>
<feature type="transmembrane region" description="Helical" evidence="1">
    <location>
        <begin position="528"/>
        <end position="548"/>
    </location>
</feature>
<feature type="transmembrane region" description="Helical" evidence="1">
    <location>
        <begin position="853"/>
        <end position="873"/>
    </location>
</feature>
<feature type="transmembrane region" description="Helical" evidence="1">
    <location>
        <begin position="875"/>
        <end position="895"/>
    </location>
</feature>
<feature type="transmembrane region" description="Helical" evidence="1">
    <location>
        <begin position="897"/>
        <end position="917"/>
    </location>
</feature>
<feature type="transmembrane region" description="Helical" evidence="1">
    <location>
        <begin position="953"/>
        <end position="973"/>
    </location>
</feature>
<feature type="transmembrane region" description="Helical" evidence="1">
    <location>
        <begin position="984"/>
        <end position="1004"/>
    </location>
</feature>
<proteinExistence type="inferred from homology"/>
<comment type="subunit">
    <text evidence="1">Part of a tripartite efflux system composed of MdtA, MdtB and MdtC. MdtC forms a heteromultimer with MdtB.</text>
</comment>
<comment type="subcellular location">
    <subcellularLocation>
        <location evidence="1">Cell inner membrane</location>
        <topology evidence="1">Multi-pass membrane protein</topology>
    </subcellularLocation>
</comment>
<comment type="similarity">
    <text evidence="1">Belongs to the resistance-nodulation-cell division (RND) (TC 2.A.6) family. MdtC subfamily.</text>
</comment>
<sequence length="1026" mass="110613">MKFFALFIHRPVATLLLTLAIALCGVLGFRLLPVSPLPQVDFPVISVSASLPGASPETMASAVATPLERALGRIAGVSEMTSTSSLGSTRVILVFNLDRDINGAARDVQAAINAAQNLLPSGMSSRPTYRKVNPSDAPVMILTLTSDTYSQGQLYDFASTQLSQKISQMEGVGDVSIGGSSLPAVRVALNPVALFNQGISLDEVRQAIAQANVRQPLGNVENSQKSWQIKTNDELKTADAYAPLIIHYNNGAAVRLSDVATVEDSVQNSRNAGMANAKPAILVMIRRAPDANIITTVDNIRAAMPELRASLPAEIQLDVAQDRSPTIRASLAEVEQSLVIAVALVILVVFLFLRSGRATAIPALAVPVSLIGTFAAMYLCGFSLNNLSLMALTIATGFVVDDAIVVLENISRHIEAGMKPLQASLQGVREVGFTVLSMSLSLVAVFIPLLLMEGLPGRLFREFAVTLSVAIMISLLISLTLTPMLCARLLRAVPKRSQPRKQGFNRVLLAMQQGYGRSLKWVLNHARWVLLLLLGTIALNVWLYISIPKTFFPEQDTGRLMGFIQADQSISFQAMTVKLQNFMTIVSSDPAVDNVNGFTGGSRTNSGSMFISLKPLSERDVSAQQVISRLRIKLAKEPGANLFLMPVQDIRIGGREANAGYQYTLLSDDLSELRTWEPKIRAAFSKLPELADVNSDQQDKGAEMALTYDRDAMAQLGISVSAVNALLNNAFGQRQISTIYQPLNQYKVVMEVDDAYTQDVSSLNKMFVINSEGKPIPLSYFASWKPINAPLSVNHQGLSAASTISFNLPEGTDLSSATAAIERTMTSLGVPSAVRGQFSGTAQAFQQSQSSQLLLILAAIITVYIVLGVLYESYVHPLTILSTLPSAGVGALLALEWFGAPFSLVALIGIMLLIGIVKKNAIMMVDFALVAQRSGKLSAQDAIFQACLLRFRPIMMTTLAALFGALPLVLTSGDGAELRQPLGITIVGGLVMSQILTLYTTPVVYLFFDKLRNIRRKAPERDVSLS</sequence>
<name>MDTC_PECCP</name>
<organism>
    <name type="scientific">Pectobacterium carotovorum subsp. carotovorum (strain PC1)</name>
    <dbReference type="NCBI Taxonomy" id="561230"/>
    <lineage>
        <taxon>Bacteria</taxon>
        <taxon>Pseudomonadati</taxon>
        <taxon>Pseudomonadota</taxon>
        <taxon>Gammaproteobacteria</taxon>
        <taxon>Enterobacterales</taxon>
        <taxon>Pectobacteriaceae</taxon>
        <taxon>Pectobacterium</taxon>
    </lineage>
</organism>
<dbReference type="EMBL" id="CP001657">
    <property type="protein sequence ID" value="ACT13991.1"/>
    <property type="molecule type" value="Genomic_DNA"/>
</dbReference>
<dbReference type="RefSeq" id="WP_015841146.1">
    <property type="nucleotide sequence ID" value="NC_012917.1"/>
</dbReference>
<dbReference type="SMR" id="C6DBC8"/>
<dbReference type="STRING" id="561230.PC1_2968"/>
<dbReference type="KEGG" id="pct:PC1_2968"/>
<dbReference type="eggNOG" id="COG0841">
    <property type="taxonomic scope" value="Bacteria"/>
</dbReference>
<dbReference type="HOGENOM" id="CLU_002755_1_2_6"/>
<dbReference type="OrthoDB" id="9757904at2"/>
<dbReference type="Proteomes" id="UP000002736">
    <property type="component" value="Chromosome"/>
</dbReference>
<dbReference type="GO" id="GO:0005886">
    <property type="term" value="C:plasma membrane"/>
    <property type="evidence" value="ECO:0007669"/>
    <property type="project" value="UniProtKB-SubCell"/>
</dbReference>
<dbReference type="GO" id="GO:0042910">
    <property type="term" value="F:xenobiotic transmembrane transporter activity"/>
    <property type="evidence" value="ECO:0007669"/>
    <property type="project" value="TreeGrafter"/>
</dbReference>
<dbReference type="FunFam" id="1.20.1640.10:FF:000001">
    <property type="entry name" value="Efflux pump membrane transporter"/>
    <property type="match status" value="1"/>
</dbReference>
<dbReference type="FunFam" id="3.30.70.1430:FF:000001">
    <property type="entry name" value="Efflux pump membrane transporter"/>
    <property type="match status" value="1"/>
</dbReference>
<dbReference type="Gene3D" id="3.30.70.1430">
    <property type="entry name" value="Multidrug efflux transporter AcrB pore domain"/>
    <property type="match status" value="2"/>
</dbReference>
<dbReference type="Gene3D" id="3.30.70.1440">
    <property type="entry name" value="Multidrug efflux transporter AcrB pore domain"/>
    <property type="match status" value="1"/>
</dbReference>
<dbReference type="Gene3D" id="3.30.70.1320">
    <property type="entry name" value="Multidrug efflux transporter AcrB pore domain like"/>
    <property type="match status" value="1"/>
</dbReference>
<dbReference type="Gene3D" id="3.30.2090.10">
    <property type="entry name" value="Multidrug efflux transporter AcrB TolC docking domain, DN and DC subdomains"/>
    <property type="match status" value="2"/>
</dbReference>
<dbReference type="Gene3D" id="1.20.1640.10">
    <property type="entry name" value="Multidrug efflux transporter AcrB transmembrane domain"/>
    <property type="match status" value="2"/>
</dbReference>
<dbReference type="HAMAP" id="MF_01424">
    <property type="entry name" value="MdtC"/>
    <property type="match status" value="1"/>
</dbReference>
<dbReference type="InterPro" id="IPR027463">
    <property type="entry name" value="AcrB_DN_DC_subdom"/>
</dbReference>
<dbReference type="InterPro" id="IPR001036">
    <property type="entry name" value="Acrflvin-R"/>
</dbReference>
<dbReference type="InterPro" id="IPR023931">
    <property type="entry name" value="Multidrug-R_MdtC"/>
</dbReference>
<dbReference type="NCBIfam" id="NF007905">
    <property type="entry name" value="PRK10614.1"/>
    <property type="match status" value="1"/>
</dbReference>
<dbReference type="NCBIfam" id="NF033617">
    <property type="entry name" value="RND_permease_2"/>
    <property type="match status" value="1"/>
</dbReference>
<dbReference type="PANTHER" id="PTHR32063">
    <property type="match status" value="1"/>
</dbReference>
<dbReference type="PANTHER" id="PTHR32063:SF34">
    <property type="entry name" value="MULTIDRUG RESISTANCE PROTEIN MDTC"/>
    <property type="match status" value="1"/>
</dbReference>
<dbReference type="Pfam" id="PF00873">
    <property type="entry name" value="ACR_tran"/>
    <property type="match status" value="1"/>
</dbReference>
<dbReference type="PRINTS" id="PR00702">
    <property type="entry name" value="ACRIFLAVINRP"/>
</dbReference>
<dbReference type="SUPFAM" id="SSF82693">
    <property type="entry name" value="Multidrug efflux transporter AcrB pore domain, PN1, PN2, PC1 and PC2 subdomains"/>
    <property type="match status" value="3"/>
</dbReference>
<dbReference type="SUPFAM" id="SSF82714">
    <property type="entry name" value="Multidrug efflux transporter AcrB TolC docking domain, DN and DC subdomains"/>
    <property type="match status" value="2"/>
</dbReference>
<dbReference type="SUPFAM" id="SSF82866">
    <property type="entry name" value="Multidrug efflux transporter AcrB transmembrane domain"/>
    <property type="match status" value="2"/>
</dbReference>
<accession>C6DBC8</accession>
<evidence type="ECO:0000255" key="1">
    <source>
        <dbReference type="HAMAP-Rule" id="MF_01424"/>
    </source>
</evidence>
<reference key="1">
    <citation type="submission" date="2009-07" db="EMBL/GenBank/DDBJ databases">
        <title>Complete sequence of Pectobacterium carotovorum subsp. carotovorum PC1.</title>
        <authorList>
            <consortium name="US DOE Joint Genome Institute"/>
            <person name="Lucas S."/>
            <person name="Copeland A."/>
            <person name="Lapidus A."/>
            <person name="Glavina del Rio T."/>
            <person name="Tice H."/>
            <person name="Bruce D."/>
            <person name="Goodwin L."/>
            <person name="Pitluck S."/>
            <person name="Munk A.C."/>
            <person name="Brettin T."/>
            <person name="Detter J.C."/>
            <person name="Han C."/>
            <person name="Tapia R."/>
            <person name="Larimer F."/>
            <person name="Land M."/>
            <person name="Hauser L."/>
            <person name="Kyrpides N."/>
            <person name="Mikhailova N."/>
            <person name="Balakrishnan V."/>
            <person name="Glasner J."/>
            <person name="Perna N.T."/>
        </authorList>
    </citation>
    <scope>NUCLEOTIDE SEQUENCE [LARGE SCALE GENOMIC DNA]</scope>
    <source>
        <strain>PC1</strain>
    </source>
</reference>
<protein>
    <recommendedName>
        <fullName evidence="1">Multidrug resistance protein MdtC</fullName>
    </recommendedName>
    <alternativeName>
        <fullName evidence="1">Multidrug transporter MdtC</fullName>
    </alternativeName>
</protein>